<reference key="1">
    <citation type="journal article" date="2009" name="PLoS Genet.">
        <title>Organised genome dynamics in the Escherichia coli species results in highly diverse adaptive paths.</title>
        <authorList>
            <person name="Touchon M."/>
            <person name="Hoede C."/>
            <person name="Tenaillon O."/>
            <person name="Barbe V."/>
            <person name="Baeriswyl S."/>
            <person name="Bidet P."/>
            <person name="Bingen E."/>
            <person name="Bonacorsi S."/>
            <person name="Bouchier C."/>
            <person name="Bouvet O."/>
            <person name="Calteau A."/>
            <person name="Chiapello H."/>
            <person name="Clermont O."/>
            <person name="Cruveiller S."/>
            <person name="Danchin A."/>
            <person name="Diard M."/>
            <person name="Dossat C."/>
            <person name="Karoui M.E."/>
            <person name="Frapy E."/>
            <person name="Garry L."/>
            <person name="Ghigo J.M."/>
            <person name="Gilles A.M."/>
            <person name="Johnson J."/>
            <person name="Le Bouguenec C."/>
            <person name="Lescat M."/>
            <person name="Mangenot S."/>
            <person name="Martinez-Jehanne V."/>
            <person name="Matic I."/>
            <person name="Nassif X."/>
            <person name="Oztas S."/>
            <person name="Petit M.A."/>
            <person name="Pichon C."/>
            <person name="Rouy Z."/>
            <person name="Ruf C.S."/>
            <person name="Schneider D."/>
            <person name="Tourret J."/>
            <person name="Vacherie B."/>
            <person name="Vallenet D."/>
            <person name="Medigue C."/>
            <person name="Rocha E.P.C."/>
            <person name="Denamur E."/>
        </authorList>
    </citation>
    <scope>NUCLEOTIDE SEQUENCE [LARGE SCALE GENOMIC DNA]</scope>
    <source>
        <strain>55989 / EAEC</strain>
    </source>
</reference>
<comment type="catalytic activity">
    <reaction evidence="1">
        <text>D-altronate + NAD(+) = keto-D-tagaturonate + NADH + H(+)</text>
        <dbReference type="Rhea" id="RHEA:17813"/>
        <dbReference type="ChEBI" id="CHEBI:15378"/>
        <dbReference type="ChEBI" id="CHEBI:17360"/>
        <dbReference type="ChEBI" id="CHEBI:17886"/>
        <dbReference type="ChEBI" id="CHEBI:57540"/>
        <dbReference type="ChEBI" id="CHEBI:57945"/>
        <dbReference type="EC" id="1.1.1.58"/>
    </reaction>
</comment>
<comment type="pathway">
    <text evidence="1">Carbohydrate metabolism; pentose and glucuronate interconversion.</text>
</comment>
<comment type="similarity">
    <text evidence="1">Belongs to the mannitol dehydrogenase family. UxaB subfamily.</text>
</comment>
<name>UXAB_ECO55</name>
<sequence length="483" mass="54822">MKTLNRRDFPGAQYPERIIQFGEGNFLRAFVDWQIDLLNEHTDLNSGVVVVRPIETSFPPSLSTQDGLYTTIIRGLNEKGEAVSDARLIRSVNREISVYSEYDEFLKLAHNPEMRFVFSNTTEAGISYHAGDKFDDAPAVSYPAKLTRLLFERFSHFNGALDKGWIIIPCELIDYNGDALRELVLRYAQEWALPEAFIQWLDQANSFCSTLVDRIVTGYPRDEVAKLEEELGYHDGFLDTAEHFYLFVIQGPKSLATELRLDKYPLNVLIVDDIKPYKERKVAILNGAHTALVPVAFQAGLDTVGEAMNDAEICAFVEKAIYEEIIPVLDLPRDELESFASAVTGRFRNPYIKHQLLSIALNGMTKFRTRILPQLLAGQKAKGTLPARLTFALAALIAFYRGERNGETYPVQDDAHWLERYQQLWSQHRDRVIGTQELVAIVLAEKDHWEQDLTQVPGLVEQVANDLDAILEKGMREAVRPLC</sequence>
<protein>
    <recommendedName>
        <fullName evidence="1">Altronate oxidoreductase</fullName>
        <ecNumber evidence="1">1.1.1.58</ecNumber>
    </recommendedName>
    <alternativeName>
        <fullName evidence="1">Tagaturonate dehydrogenase</fullName>
    </alternativeName>
    <alternativeName>
        <fullName evidence="1">Tagaturonate reductase</fullName>
    </alternativeName>
</protein>
<evidence type="ECO:0000255" key="1">
    <source>
        <dbReference type="HAMAP-Rule" id="MF_00670"/>
    </source>
</evidence>
<keyword id="KW-0520">NAD</keyword>
<keyword id="KW-0560">Oxidoreductase</keyword>
<keyword id="KW-1185">Reference proteome</keyword>
<feature type="chain" id="PRO_1000147658" description="Altronate oxidoreductase">
    <location>
        <begin position="1"/>
        <end position="483"/>
    </location>
</feature>
<feature type="binding site" evidence="1">
    <location>
        <begin position="18"/>
        <end position="29"/>
    </location>
    <ligand>
        <name>NAD(+)</name>
        <dbReference type="ChEBI" id="CHEBI:57540"/>
    </ligand>
</feature>
<organism>
    <name type="scientific">Escherichia coli (strain 55989 / EAEC)</name>
    <dbReference type="NCBI Taxonomy" id="585055"/>
    <lineage>
        <taxon>Bacteria</taxon>
        <taxon>Pseudomonadati</taxon>
        <taxon>Pseudomonadota</taxon>
        <taxon>Gammaproteobacteria</taxon>
        <taxon>Enterobacterales</taxon>
        <taxon>Enterobacteriaceae</taxon>
        <taxon>Escherichia</taxon>
    </lineage>
</organism>
<gene>
    <name evidence="1" type="primary">uxaB</name>
    <name type="ordered locus">EC55989_1654</name>
</gene>
<dbReference type="EC" id="1.1.1.58" evidence="1"/>
<dbReference type="EMBL" id="CU928145">
    <property type="protein sequence ID" value="CAU97507.1"/>
    <property type="molecule type" value="Genomic_DNA"/>
</dbReference>
<dbReference type="RefSeq" id="WP_000854624.1">
    <property type="nucleotide sequence ID" value="NC_011748.1"/>
</dbReference>
<dbReference type="SMR" id="B7L7M1"/>
<dbReference type="GeneID" id="75202151"/>
<dbReference type="KEGG" id="eck:EC55989_1654"/>
<dbReference type="HOGENOM" id="CLU_027324_1_0_6"/>
<dbReference type="UniPathway" id="UPA00246"/>
<dbReference type="Proteomes" id="UP000000746">
    <property type="component" value="Chromosome"/>
</dbReference>
<dbReference type="GO" id="GO:0005829">
    <property type="term" value="C:cytosol"/>
    <property type="evidence" value="ECO:0007669"/>
    <property type="project" value="TreeGrafter"/>
</dbReference>
<dbReference type="GO" id="GO:0008926">
    <property type="term" value="F:mannitol-1-phosphate 5-dehydrogenase activity"/>
    <property type="evidence" value="ECO:0007669"/>
    <property type="project" value="TreeGrafter"/>
</dbReference>
<dbReference type="GO" id="GO:0009026">
    <property type="term" value="F:tagaturonate reductase activity"/>
    <property type="evidence" value="ECO:0007669"/>
    <property type="project" value="UniProtKB-UniRule"/>
</dbReference>
<dbReference type="GO" id="GO:0019698">
    <property type="term" value="P:D-galacturonate catabolic process"/>
    <property type="evidence" value="ECO:0007669"/>
    <property type="project" value="TreeGrafter"/>
</dbReference>
<dbReference type="GO" id="GO:0019592">
    <property type="term" value="P:mannitol catabolic process"/>
    <property type="evidence" value="ECO:0007669"/>
    <property type="project" value="TreeGrafter"/>
</dbReference>
<dbReference type="FunFam" id="1.10.1040.10:FF:000018">
    <property type="entry name" value="Altronate oxidoreductase"/>
    <property type="match status" value="1"/>
</dbReference>
<dbReference type="FunFam" id="3.40.50.720:FF:000153">
    <property type="entry name" value="Altronate oxidoreductase"/>
    <property type="match status" value="1"/>
</dbReference>
<dbReference type="Gene3D" id="1.10.1040.10">
    <property type="entry name" value="N-(1-d-carboxylethyl)-l-norvaline Dehydrogenase, domain 2"/>
    <property type="match status" value="1"/>
</dbReference>
<dbReference type="Gene3D" id="3.40.50.720">
    <property type="entry name" value="NAD(P)-binding Rossmann-like Domain"/>
    <property type="match status" value="1"/>
</dbReference>
<dbReference type="HAMAP" id="MF_00670">
    <property type="entry name" value="Altron_oxidoreduct"/>
    <property type="match status" value="1"/>
</dbReference>
<dbReference type="InterPro" id="IPR008927">
    <property type="entry name" value="6-PGluconate_DH-like_C_sf"/>
</dbReference>
<dbReference type="InterPro" id="IPR013328">
    <property type="entry name" value="6PGD_dom2"/>
</dbReference>
<dbReference type="InterPro" id="IPR023668">
    <property type="entry name" value="Altronate_OxRdtase"/>
</dbReference>
<dbReference type="InterPro" id="IPR013118">
    <property type="entry name" value="Mannitol_DH_C"/>
</dbReference>
<dbReference type="InterPro" id="IPR013131">
    <property type="entry name" value="Mannitol_DH_N"/>
</dbReference>
<dbReference type="InterPro" id="IPR036291">
    <property type="entry name" value="NAD(P)-bd_dom_sf"/>
</dbReference>
<dbReference type="NCBIfam" id="NF002969">
    <property type="entry name" value="PRK03643.1"/>
    <property type="match status" value="1"/>
</dbReference>
<dbReference type="PANTHER" id="PTHR30524:SF0">
    <property type="entry name" value="ALTRONATE OXIDOREDUCTASE-RELATED"/>
    <property type="match status" value="1"/>
</dbReference>
<dbReference type="PANTHER" id="PTHR30524">
    <property type="entry name" value="MANNITOL-1-PHOSPHATE 5-DEHYDROGENASE"/>
    <property type="match status" value="1"/>
</dbReference>
<dbReference type="Pfam" id="PF01232">
    <property type="entry name" value="Mannitol_dh"/>
    <property type="match status" value="1"/>
</dbReference>
<dbReference type="Pfam" id="PF08125">
    <property type="entry name" value="Mannitol_dh_C"/>
    <property type="match status" value="1"/>
</dbReference>
<dbReference type="SUPFAM" id="SSF48179">
    <property type="entry name" value="6-phosphogluconate dehydrogenase C-terminal domain-like"/>
    <property type="match status" value="1"/>
</dbReference>
<dbReference type="SUPFAM" id="SSF51735">
    <property type="entry name" value="NAD(P)-binding Rossmann-fold domains"/>
    <property type="match status" value="1"/>
</dbReference>
<proteinExistence type="inferred from homology"/>
<accession>B7L7M1</accession>